<name>NUDC_VIBPA</name>
<keyword id="KW-0378">Hydrolase</keyword>
<keyword id="KW-0460">Magnesium</keyword>
<keyword id="KW-0464">Manganese</keyword>
<keyword id="KW-0479">Metal-binding</keyword>
<keyword id="KW-0520">NAD</keyword>
<keyword id="KW-0862">Zinc</keyword>
<feature type="chain" id="PRO_0000056979" description="NAD-capped RNA hydrolase NudC">
    <location>
        <begin position="1"/>
        <end position="260"/>
    </location>
</feature>
<feature type="domain" description="Nudix hydrolase" evidence="1">
    <location>
        <begin position="130"/>
        <end position="253"/>
    </location>
</feature>
<feature type="short sequence motif" description="Nudix box" evidence="1">
    <location>
        <begin position="164"/>
        <end position="185"/>
    </location>
</feature>
<feature type="binding site" evidence="1">
    <location>
        <position position="74"/>
    </location>
    <ligand>
        <name>substrate</name>
    </ligand>
</feature>
<feature type="binding site" evidence="1">
    <location>
        <position position="103"/>
    </location>
    <ligand>
        <name>Zn(2+)</name>
        <dbReference type="ChEBI" id="CHEBI:29105"/>
    </ligand>
</feature>
<feature type="binding site" evidence="1">
    <location>
        <position position="106"/>
    </location>
    <ligand>
        <name>Zn(2+)</name>
        <dbReference type="ChEBI" id="CHEBI:29105"/>
    </ligand>
</feature>
<feature type="binding site" evidence="1">
    <location>
        <position position="121"/>
    </location>
    <ligand>
        <name>Zn(2+)</name>
        <dbReference type="ChEBI" id="CHEBI:29105"/>
    </ligand>
</feature>
<feature type="binding site" evidence="1">
    <location>
        <position position="124"/>
    </location>
    <ligand>
        <name>Zn(2+)</name>
        <dbReference type="ChEBI" id="CHEBI:29105"/>
    </ligand>
</feature>
<feature type="binding site" evidence="1">
    <location>
        <position position="129"/>
    </location>
    <ligand>
        <name>substrate</name>
    </ligand>
</feature>
<feature type="binding site" evidence="1">
    <location>
        <position position="163"/>
    </location>
    <ligand>
        <name>a divalent metal cation</name>
        <dbReference type="ChEBI" id="CHEBI:60240"/>
        <label>1</label>
    </ligand>
</feature>
<feature type="binding site" evidence="1">
    <location>
        <position position="179"/>
    </location>
    <ligand>
        <name>a divalent metal cation</name>
        <dbReference type="ChEBI" id="CHEBI:60240"/>
        <label>2</label>
    </ligand>
</feature>
<feature type="binding site" evidence="1">
    <location>
        <position position="179"/>
    </location>
    <ligand>
        <name>a divalent metal cation</name>
        <dbReference type="ChEBI" id="CHEBI:60240"/>
        <label>3</label>
    </ligand>
</feature>
<feature type="binding site" evidence="1">
    <location>
        <position position="183"/>
    </location>
    <ligand>
        <name>a divalent metal cation</name>
        <dbReference type="ChEBI" id="CHEBI:60240"/>
        <label>1</label>
    </ligand>
</feature>
<feature type="binding site" evidence="1">
    <location>
        <position position="183"/>
    </location>
    <ligand>
        <name>a divalent metal cation</name>
        <dbReference type="ChEBI" id="CHEBI:60240"/>
        <label>3</label>
    </ligand>
</feature>
<feature type="binding site" evidence="1">
    <location>
        <begin position="197"/>
        <end position="204"/>
    </location>
    <ligand>
        <name>substrate</name>
    </ligand>
</feature>
<feature type="binding site" evidence="1">
    <location>
        <position position="224"/>
    </location>
    <ligand>
        <name>a divalent metal cation</name>
        <dbReference type="ChEBI" id="CHEBI:60240"/>
        <label>1</label>
    </ligand>
</feature>
<feature type="binding site" evidence="1">
    <location>
        <position position="224"/>
    </location>
    <ligand>
        <name>a divalent metal cation</name>
        <dbReference type="ChEBI" id="CHEBI:60240"/>
        <label>3</label>
    </ligand>
</feature>
<feature type="binding site" evidence="1">
    <location>
        <position position="246"/>
    </location>
    <ligand>
        <name>substrate</name>
    </ligand>
</feature>
<comment type="function">
    <text evidence="1">mRNA decapping enzyme that specifically removes the nicotinamide adenine dinucleotide (NAD) cap from a subset of mRNAs by hydrolyzing the diphosphate linkage to produce nicotinamide mononucleotide (NMN) and 5' monophosphate mRNA. The NAD-cap is present at the 5'-end of some mRNAs and stabilizes RNA against 5'-processing. Has preference for mRNAs with a 5'-end purine. Catalyzes the hydrolysis of a broad range of dinucleotide pyrophosphates.</text>
</comment>
<comment type="catalytic activity">
    <reaction evidence="1">
        <text>a 5'-end NAD(+)-phospho-ribonucleoside in mRNA + H2O = a 5'-end phospho-adenosine-phospho-ribonucleoside in mRNA + beta-nicotinamide D-ribonucleotide + 2 H(+)</text>
        <dbReference type="Rhea" id="RHEA:60876"/>
        <dbReference type="Rhea" id="RHEA-COMP:15698"/>
        <dbReference type="Rhea" id="RHEA-COMP:15719"/>
        <dbReference type="ChEBI" id="CHEBI:14649"/>
        <dbReference type="ChEBI" id="CHEBI:15377"/>
        <dbReference type="ChEBI" id="CHEBI:15378"/>
        <dbReference type="ChEBI" id="CHEBI:144029"/>
        <dbReference type="ChEBI" id="CHEBI:144051"/>
    </reaction>
    <physiologicalReaction direction="left-to-right" evidence="1">
        <dbReference type="Rhea" id="RHEA:60877"/>
    </physiologicalReaction>
</comment>
<comment type="catalytic activity">
    <reaction evidence="1">
        <text>NAD(+) + H2O = beta-nicotinamide D-ribonucleotide + AMP + 2 H(+)</text>
        <dbReference type="Rhea" id="RHEA:11800"/>
        <dbReference type="ChEBI" id="CHEBI:14649"/>
        <dbReference type="ChEBI" id="CHEBI:15377"/>
        <dbReference type="ChEBI" id="CHEBI:15378"/>
        <dbReference type="ChEBI" id="CHEBI:57540"/>
        <dbReference type="ChEBI" id="CHEBI:456215"/>
        <dbReference type="EC" id="3.6.1.22"/>
    </reaction>
</comment>
<comment type="catalytic activity">
    <reaction evidence="1">
        <text>NADH + H2O = reduced beta-nicotinamide D-ribonucleotide + AMP + 2 H(+)</text>
        <dbReference type="Rhea" id="RHEA:48868"/>
        <dbReference type="ChEBI" id="CHEBI:15377"/>
        <dbReference type="ChEBI" id="CHEBI:15378"/>
        <dbReference type="ChEBI" id="CHEBI:57945"/>
        <dbReference type="ChEBI" id="CHEBI:90832"/>
        <dbReference type="ChEBI" id="CHEBI:456215"/>
        <dbReference type="EC" id="3.6.1.22"/>
    </reaction>
</comment>
<comment type="cofactor">
    <cofactor evidence="1">
        <name>Mg(2+)</name>
        <dbReference type="ChEBI" id="CHEBI:18420"/>
    </cofactor>
    <cofactor evidence="1">
        <name>Mn(2+)</name>
        <dbReference type="ChEBI" id="CHEBI:29035"/>
    </cofactor>
    <text evidence="1">Divalent metal cations. Mg(2+) or Mn(2+).</text>
</comment>
<comment type="cofactor">
    <cofactor evidence="1">
        <name>Zn(2+)</name>
        <dbReference type="ChEBI" id="CHEBI:29105"/>
    </cofactor>
    <text evidence="1">Binds 1 zinc ion per subunit.</text>
</comment>
<comment type="subunit">
    <text evidence="1">Homodimer.</text>
</comment>
<comment type="similarity">
    <text evidence="1">Belongs to the Nudix hydrolase family. NudC subfamily.</text>
</comment>
<gene>
    <name evidence="1" type="primary">nudC</name>
    <name type="ordered locus">VP2919</name>
</gene>
<reference key="1">
    <citation type="journal article" date="2003" name="Lancet">
        <title>Genome sequence of Vibrio parahaemolyticus: a pathogenic mechanism distinct from that of V. cholerae.</title>
        <authorList>
            <person name="Makino K."/>
            <person name="Oshima K."/>
            <person name="Kurokawa K."/>
            <person name="Yokoyama K."/>
            <person name="Uda T."/>
            <person name="Tagomori K."/>
            <person name="Iijima Y."/>
            <person name="Najima M."/>
            <person name="Nakano M."/>
            <person name="Yamashita A."/>
            <person name="Kubota Y."/>
            <person name="Kimura S."/>
            <person name="Yasunaga T."/>
            <person name="Honda T."/>
            <person name="Shinagawa H."/>
            <person name="Hattori M."/>
            <person name="Iida T."/>
        </authorList>
    </citation>
    <scope>NUCLEOTIDE SEQUENCE [LARGE SCALE GENOMIC DNA]</scope>
    <source>
        <strain>RIMD 2210633</strain>
    </source>
</reference>
<organism>
    <name type="scientific">Vibrio parahaemolyticus serotype O3:K6 (strain RIMD 2210633)</name>
    <dbReference type="NCBI Taxonomy" id="223926"/>
    <lineage>
        <taxon>Bacteria</taxon>
        <taxon>Pseudomonadati</taxon>
        <taxon>Pseudomonadota</taxon>
        <taxon>Gammaproteobacteria</taxon>
        <taxon>Vibrionales</taxon>
        <taxon>Vibrionaceae</taxon>
        <taxon>Vibrio</taxon>
    </lineage>
</organism>
<dbReference type="EC" id="3.6.1.-" evidence="1"/>
<dbReference type="EC" id="3.6.1.22" evidence="1"/>
<dbReference type="EMBL" id="BA000031">
    <property type="protein sequence ID" value="BAC61182.1"/>
    <property type="molecule type" value="Genomic_DNA"/>
</dbReference>
<dbReference type="RefSeq" id="NP_799298.1">
    <property type="nucleotide sequence ID" value="NC_004603.1"/>
</dbReference>
<dbReference type="RefSeq" id="WP_005456481.1">
    <property type="nucleotide sequence ID" value="NC_004603.1"/>
</dbReference>
<dbReference type="SMR" id="Q87KQ7"/>
<dbReference type="GeneID" id="1190494"/>
<dbReference type="KEGG" id="vpa:VP2919"/>
<dbReference type="PATRIC" id="fig|223926.6.peg.2807"/>
<dbReference type="eggNOG" id="COG2816">
    <property type="taxonomic scope" value="Bacteria"/>
</dbReference>
<dbReference type="HOGENOM" id="CLU_037162_0_1_6"/>
<dbReference type="Proteomes" id="UP000002493">
    <property type="component" value="Chromosome 1"/>
</dbReference>
<dbReference type="GO" id="GO:0005829">
    <property type="term" value="C:cytosol"/>
    <property type="evidence" value="ECO:0007669"/>
    <property type="project" value="TreeGrafter"/>
</dbReference>
<dbReference type="GO" id="GO:0000287">
    <property type="term" value="F:magnesium ion binding"/>
    <property type="evidence" value="ECO:0007669"/>
    <property type="project" value="UniProtKB-UniRule"/>
</dbReference>
<dbReference type="GO" id="GO:0030145">
    <property type="term" value="F:manganese ion binding"/>
    <property type="evidence" value="ECO:0007669"/>
    <property type="project" value="UniProtKB-UniRule"/>
</dbReference>
<dbReference type="GO" id="GO:0000210">
    <property type="term" value="F:NAD+ diphosphatase activity"/>
    <property type="evidence" value="ECO:0007669"/>
    <property type="project" value="UniProtKB-UniRule"/>
</dbReference>
<dbReference type="GO" id="GO:0035529">
    <property type="term" value="F:NADH pyrophosphatase activity"/>
    <property type="evidence" value="ECO:0007669"/>
    <property type="project" value="TreeGrafter"/>
</dbReference>
<dbReference type="GO" id="GO:0110153">
    <property type="term" value="F:RNA NAD-cap (NMN-forming) hydrolase activity"/>
    <property type="evidence" value="ECO:0007669"/>
    <property type="project" value="RHEA"/>
</dbReference>
<dbReference type="GO" id="GO:0008270">
    <property type="term" value="F:zinc ion binding"/>
    <property type="evidence" value="ECO:0007669"/>
    <property type="project" value="UniProtKB-UniRule"/>
</dbReference>
<dbReference type="GO" id="GO:0019677">
    <property type="term" value="P:NAD catabolic process"/>
    <property type="evidence" value="ECO:0007669"/>
    <property type="project" value="TreeGrafter"/>
</dbReference>
<dbReference type="GO" id="GO:0006734">
    <property type="term" value="P:NADH metabolic process"/>
    <property type="evidence" value="ECO:0007669"/>
    <property type="project" value="TreeGrafter"/>
</dbReference>
<dbReference type="GO" id="GO:0006742">
    <property type="term" value="P:NADP catabolic process"/>
    <property type="evidence" value="ECO:0007669"/>
    <property type="project" value="TreeGrafter"/>
</dbReference>
<dbReference type="CDD" id="cd03429">
    <property type="entry name" value="NUDIX_NADH_pyrophosphatase_Nudt13"/>
    <property type="match status" value="1"/>
</dbReference>
<dbReference type="FunFam" id="3.90.79.10:FF:000004">
    <property type="entry name" value="NADH pyrophosphatase"/>
    <property type="match status" value="1"/>
</dbReference>
<dbReference type="Gene3D" id="3.90.79.20">
    <property type="match status" value="1"/>
</dbReference>
<dbReference type="Gene3D" id="3.90.79.10">
    <property type="entry name" value="Nucleoside Triphosphate Pyrophosphohydrolase"/>
    <property type="match status" value="1"/>
</dbReference>
<dbReference type="HAMAP" id="MF_00297">
    <property type="entry name" value="Nudix_NudC"/>
    <property type="match status" value="1"/>
</dbReference>
<dbReference type="InterPro" id="IPR050241">
    <property type="entry name" value="NAD-cap_RNA_hydrolase_NudC"/>
</dbReference>
<dbReference type="InterPro" id="IPR049734">
    <property type="entry name" value="NudC-like_C"/>
</dbReference>
<dbReference type="InterPro" id="IPR015797">
    <property type="entry name" value="NUDIX_hydrolase-like_dom_sf"/>
</dbReference>
<dbReference type="InterPro" id="IPR020084">
    <property type="entry name" value="NUDIX_hydrolase_CS"/>
</dbReference>
<dbReference type="InterPro" id="IPR000086">
    <property type="entry name" value="NUDIX_hydrolase_dom"/>
</dbReference>
<dbReference type="InterPro" id="IPR022925">
    <property type="entry name" value="RNA_Hydrolase_NudC"/>
</dbReference>
<dbReference type="InterPro" id="IPR015376">
    <property type="entry name" value="Znr_NADH_PPase"/>
</dbReference>
<dbReference type="NCBIfam" id="NF001299">
    <property type="entry name" value="PRK00241.1"/>
    <property type="match status" value="1"/>
</dbReference>
<dbReference type="PANTHER" id="PTHR42904:SF6">
    <property type="entry name" value="NAD-CAPPED RNA HYDROLASE NUDT12"/>
    <property type="match status" value="1"/>
</dbReference>
<dbReference type="PANTHER" id="PTHR42904">
    <property type="entry name" value="NUDIX HYDROLASE, NUDC SUBFAMILY"/>
    <property type="match status" value="1"/>
</dbReference>
<dbReference type="Pfam" id="PF00293">
    <property type="entry name" value="NUDIX"/>
    <property type="match status" value="1"/>
</dbReference>
<dbReference type="Pfam" id="PF09297">
    <property type="entry name" value="Zn_ribbon_NUD"/>
    <property type="match status" value="1"/>
</dbReference>
<dbReference type="SUPFAM" id="SSF55811">
    <property type="entry name" value="Nudix"/>
    <property type="match status" value="1"/>
</dbReference>
<dbReference type="PROSITE" id="PS51462">
    <property type="entry name" value="NUDIX"/>
    <property type="match status" value="1"/>
</dbReference>
<dbReference type="PROSITE" id="PS00893">
    <property type="entry name" value="NUDIX_BOX"/>
    <property type="match status" value="1"/>
</dbReference>
<accession>Q87KQ7</accession>
<proteinExistence type="inferred from homology"/>
<protein>
    <recommendedName>
        <fullName evidence="1">NAD-capped RNA hydrolase NudC</fullName>
        <shortName evidence="1">DeNADding enzyme NudC</shortName>
        <ecNumber evidence="1">3.6.1.-</ecNumber>
    </recommendedName>
    <alternativeName>
        <fullName evidence="1">NADH pyrophosphatase</fullName>
        <ecNumber evidence="1">3.6.1.22</ecNumber>
    </alternativeName>
</protein>
<sequence>MLRKGDVNRVANAYWCVVAGSEIWLVDGAVPFGSAEQFSLPEENARQIGDYLGSPVMWINFADLEQDLPLVSLRDCLHFPEPLFMLLSKAIQYGHMTQSLRFCPQCGGRNFLNNNQFAMQCGECRTLHYPRIFPCIIVAVRKENQILLAQHPRHRNGMYTVIAGFLEAGETLEDCVAREVHEETGIHVKNIRYFGSQPWAFPSSMMMAFLADYDSGELNPDYTELSDAQWFGVKEMPPVAPTGTIARALIEQTISDILSD</sequence>
<evidence type="ECO:0000255" key="1">
    <source>
        <dbReference type="HAMAP-Rule" id="MF_00297"/>
    </source>
</evidence>